<dbReference type="EC" id="2.1.1.-" evidence="1"/>
<dbReference type="EC" id="2.1.1.35" evidence="1"/>
<dbReference type="EMBL" id="CP000089">
    <property type="protein sequence ID" value="AAZ46569.1"/>
    <property type="molecule type" value="Genomic_DNA"/>
</dbReference>
<dbReference type="SMR" id="Q47F12"/>
<dbReference type="STRING" id="159087.Daro_1823"/>
<dbReference type="KEGG" id="dar:Daro_1823"/>
<dbReference type="eggNOG" id="COG2265">
    <property type="taxonomic scope" value="Bacteria"/>
</dbReference>
<dbReference type="HOGENOM" id="CLU_043022_0_0_4"/>
<dbReference type="OrthoDB" id="9804590at2"/>
<dbReference type="GO" id="GO:0005829">
    <property type="term" value="C:cytosol"/>
    <property type="evidence" value="ECO:0007669"/>
    <property type="project" value="TreeGrafter"/>
</dbReference>
<dbReference type="GO" id="GO:0019843">
    <property type="term" value="F:rRNA binding"/>
    <property type="evidence" value="ECO:0007669"/>
    <property type="project" value="TreeGrafter"/>
</dbReference>
<dbReference type="GO" id="GO:0030697">
    <property type="term" value="F:tRNA (uracil(54)-C5)-methyltransferase activity, S-adenosyl methionine-dependent"/>
    <property type="evidence" value="ECO:0007669"/>
    <property type="project" value="UniProtKB-UniRule"/>
</dbReference>
<dbReference type="GO" id="GO:0000049">
    <property type="term" value="F:tRNA binding"/>
    <property type="evidence" value="ECO:0007669"/>
    <property type="project" value="TreeGrafter"/>
</dbReference>
<dbReference type="GO" id="GO:0030488">
    <property type="term" value="P:tRNA methylation"/>
    <property type="evidence" value="ECO:0007669"/>
    <property type="project" value="UniProtKB-UniRule"/>
</dbReference>
<dbReference type="CDD" id="cd02440">
    <property type="entry name" value="AdoMet_MTases"/>
    <property type="match status" value="1"/>
</dbReference>
<dbReference type="FunFam" id="2.40.50.1070:FF:000001">
    <property type="entry name" value="tRNA/tmRNA (uracil-C(5))-methyltransferase"/>
    <property type="match status" value="1"/>
</dbReference>
<dbReference type="FunFam" id="3.40.50.150:FF:000012">
    <property type="entry name" value="tRNA/tmRNA (uracil-C(5))-methyltransferase"/>
    <property type="match status" value="1"/>
</dbReference>
<dbReference type="Gene3D" id="2.40.50.1070">
    <property type="match status" value="1"/>
</dbReference>
<dbReference type="Gene3D" id="3.40.50.150">
    <property type="entry name" value="Vaccinia Virus protein VP39"/>
    <property type="match status" value="1"/>
</dbReference>
<dbReference type="HAMAP" id="MF_01011">
    <property type="entry name" value="RNA_methyltr_TrmA"/>
    <property type="match status" value="1"/>
</dbReference>
<dbReference type="InterPro" id="IPR030390">
    <property type="entry name" value="MeTrfase_TrmA_AS"/>
</dbReference>
<dbReference type="InterPro" id="IPR030391">
    <property type="entry name" value="MeTrfase_TrmA_CS"/>
</dbReference>
<dbReference type="InterPro" id="IPR029063">
    <property type="entry name" value="SAM-dependent_MTases_sf"/>
</dbReference>
<dbReference type="InterPro" id="IPR011869">
    <property type="entry name" value="TrmA_MeTrfase"/>
</dbReference>
<dbReference type="InterPro" id="IPR010280">
    <property type="entry name" value="U5_MeTrfase_fam"/>
</dbReference>
<dbReference type="NCBIfam" id="TIGR02143">
    <property type="entry name" value="trmA_only"/>
    <property type="match status" value="1"/>
</dbReference>
<dbReference type="PANTHER" id="PTHR47790">
    <property type="entry name" value="TRNA/TMRNA (URACIL-C(5))-METHYLTRANSFERASE"/>
    <property type="match status" value="1"/>
</dbReference>
<dbReference type="PANTHER" id="PTHR47790:SF2">
    <property type="entry name" value="TRNA_TMRNA (URACIL-C(5))-METHYLTRANSFERASE"/>
    <property type="match status" value="1"/>
</dbReference>
<dbReference type="Pfam" id="PF05958">
    <property type="entry name" value="tRNA_U5-meth_tr"/>
    <property type="match status" value="1"/>
</dbReference>
<dbReference type="SUPFAM" id="SSF53335">
    <property type="entry name" value="S-adenosyl-L-methionine-dependent methyltransferases"/>
    <property type="match status" value="1"/>
</dbReference>
<dbReference type="PROSITE" id="PS51687">
    <property type="entry name" value="SAM_MT_RNA_M5U"/>
    <property type="match status" value="1"/>
</dbReference>
<dbReference type="PROSITE" id="PS01230">
    <property type="entry name" value="TRMA_1"/>
    <property type="match status" value="1"/>
</dbReference>
<dbReference type="PROSITE" id="PS01231">
    <property type="entry name" value="TRMA_2"/>
    <property type="match status" value="1"/>
</dbReference>
<sequence>MPLPTYDPADYPTQLATKVAHFEQNFAPFGVANTAIHASAPLHYRMRAEFRIWHEGDDLNYAMFDPADPKQPITLETFPPAAESICHLMPRLRDKLRGNESLRRRLFQADFLATLSGEMLVTLIYHRQLDEAWEAAAREMAAELGIGLIGRSRGQKIVLDRDWVLEGFELNGRQLRYKQVEGSFTQPNGGVNRQMLGWACQQAAGFGGNLVELYCGNGNFTIALSPLFERVLATEVSKSSVHAAQYNLAANQVENVALVRMSSEEFSNALAGREEFQRLKDIDLEPFRHATLFVDPPRSGLDAVTLELARGFDRILYISCNQETLRENVIALQDTHEIKASAVFDQFPYTHHLECGLLLTRR</sequence>
<gene>
    <name evidence="1" type="primary">trmA</name>
    <name type="ordered locus">Daro_1823</name>
</gene>
<protein>
    <recommendedName>
        <fullName evidence="1">tRNA/tmRNA (uracil-C(5))-methyltransferase</fullName>
        <ecNumber evidence="1">2.1.1.-</ecNumber>
        <ecNumber evidence="1">2.1.1.35</ecNumber>
    </recommendedName>
    <alternativeName>
        <fullName evidence="1">tRNA (uracil(54)-C(5))-methyltransferase</fullName>
    </alternativeName>
    <alternativeName>
        <fullName evidence="1">tRNA(m5U54)-methyltransferase</fullName>
        <shortName evidence="1">RUMT</shortName>
    </alternativeName>
    <alternativeName>
        <fullName evidence="1">tmRNA (uracil(341)-C(5))-methyltransferase</fullName>
    </alternativeName>
</protein>
<accession>Q47F12</accession>
<keyword id="KW-0489">Methyltransferase</keyword>
<keyword id="KW-0949">S-adenosyl-L-methionine</keyword>
<keyword id="KW-0808">Transferase</keyword>
<keyword id="KW-0819">tRNA processing</keyword>
<feature type="chain" id="PRO_0000281440" description="tRNA/tmRNA (uracil-C(5))-methyltransferase">
    <location>
        <begin position="1"/>
        <end position="362"/>
    </location>
</feature>
<feature type="active site" description="Nucleophile" evidence="1">
    <location>
        <position position="320"/>
    </location>
</feature>
<feature type="active site" description="Proton acceptor" evidence="1">
    <location>
        <position position="354"/>
    </location>
</feature>
<feature type="binding site" evidence="1">
    <location>
        <position position="186"/>
    </location>
    <ligand>
        <name>S-adenosyl-L-methionine</name>
        <dbReference type="ChEBI" id="CHEBI:59789"/>
    </ligand>
</feature>
<feature type="binding site" evidence="1">
    <location>
        <position position="214"/>
    </location>
    <ligand>
        <name>S-adenosyl-L-methionine</name>
        <dbReference type="ChEBI" id="CHEBI:59789"/>
    </ligand>
</feature>
<feature type="binding site" evidence="1">
    <location>
        <position position="219"/>
    </location>
    <ligand>
        <name>S-adenosyl-L-methionine</name>
        <dbReference type="ChEBI" id="CHEBI:59789"/>
    </ligand>
</feature>
<feature type="binding site" evidence="1">
    <location>
        <position position="235"/>
    </location>
    <ligand>
        <name>S-adenosyl-L-methionine</name>
        <dbReference type="ChEBI" id="CHEBI:59789"/>
    </ligand>
</feature>
<feature type="binding site" evidence="1">
    <location>
        <position position="295"/>
    </location>
    <ligand>
        <name>S-adenosyl-L-methionine</name>
        <dbReference type="ChEBI" id="CHEBI:59789"/>
    </ligand>
</feature>
<comment type="function">
    <text evidence="1">Dual-specificity methyltransferase that catalyzes the formation of 5-methyluridine at position 54 (m5U54) in all tRNAs, and that of position 341 (m5U341) in tmRNA (transfer-mRNA).</text>
</comment>
<comment type="catalytic activity">
    <reaction evidence="1">
        <text>uridine(54) in tRNA + S-adenosyl-L-methionine = 5-methyluridine(54) in tRNA + S-adenosyl-L-homocysteine + H(+)</text>
        <dbReference type="Rhea" id="RHEA:42712"/>
        <dbReference type="Rhea" id="RHEA-COMP:10167"/>
        <dbReference type="Rhea" id="RHEA-COMP:10193"/>
        <dbReference type="ChEBI" id="CHEBI:15378"/>
        <dbReference type="ChEBI" id="CHEBI:57856"/>
        <dbReference type="ChEBI" id="CHEBI:59789"/>
        <dbReference type="ChEBI" id="CHEBI:65315"/>
        <dbReference type="ChEBI" id="CHEBI:74447"/>
        <dbReference type="EC" id="2.1.1.35"/>
    </reaction>
</comment>
<comment type="catalytic activity">
    <reaction evidence="1">
        <text>uridine(341) in tmRNA + S-adenosyl-L-methionine = 5-methyluridine(341) in tmRNA + S-adenosyl-L-homocysteine + H(+)</text>
        <dbReference type="Rhea" id="RHEA:43612"/>
        <dbReference type="Rhea" id="RHEA-COMP:10630"/>
        <dbReference type="Rhea" id="RHEA-COMP:10631"/>
        <dbReference type="ChEBI" id="CHEBI:15378"/>
        <dbReference type="ChEBI" id="CHEBI:57856"/>
        <dbReference type="ChEBI" id="CHEBI:59789"/>
        <dbReference type="ChEBI" id="CHEBI:65315"/>
        <dbReference type="ChEBI" id="CHEBI:74447"/>
    </reaction>
</comment>
<comment type="similarity">
    <text evidence="1">Belongs to the class I-like SAM-binding methyltransferase superfamily. RNA M5U methyltransferase family. TrmA subfamily.</text>
</comment>
<evidence type="ECO:0000255" key="1">
    <source>
        <dbReference type="HAMAP-Rule" id="MF_01011"/>
    </source>
</evidence>
<proteinExistence type="inferred from homology"/>
<reference key="1">
    <citation type="journal article" date="2009" name="BMC Genomics">
        <title>Metabolic analysis of the soil microbe Dechloromonas aromatica str. RCB: indications of a surprisingly complex life-style and cryptic anaerobic pathways for aromatic degradation.</title>
        <authorList>
            <person name="Salinero K.K."/>
            <person name="Keller K."/>
            <person name="Feil W.S."/>
            <person name="Feil H."/>
            <person name="Trong S."/>
            <person name="Di Bartolo G."/>
            <person name="Lapidus A."/>
        </authorList>
    </citation>
    <scope>NUCLEOTIDE SEQUENCE [LARGE SCALE GENOMIC DNA]</scope>
    <source>
        <strain>RCB</strain>
    </source>
</reference>
<organism>
    <name type="scientific">Dechloromonas aromatica (strain RCB)</name>
    <dbReference type="NCBI Taxonomy" id="159087"/>
    <lineage>
        <taxon>Bacteria</taxon>
        <taxon>Pseudomonadati</taxon>
        <taxon>Pseudomonadota</taxon>
        <taxon>Betaproteobacteria</taxon>
        <taxon>Rhodocyclales</taxon>
        <taxon>Azonexaceae</taxon>
        <taxon>Dechloromonas</taxon>
    </lineage>
</organism>
<name>TRMA_DECAR</name>